<organism>
    <name type="scientific">Shewanella amazonensis (strain ATCC BAA-1098 / SB2B)</name>
    <dbReference type="NCBI Taxonomy" id="326297"/>
    <lineage>
        <taxon>Bacteria</taxon>
        <taxon>Pseudomonadati</taxon>
        <taxon>Pseudomonadota</taxon>
        <taxon>Gammaproteobacteria</taxon>
        <taxon>Alteromonadales</taxon>
        <taxon>Shewanellaceae</taxon>
        <taxon>Shewanella</taxon>
    </lineage>
</organism>
<sequence>MAKKIEAYIKLQVKSGSANPSPPVGPALGQKGVNIMEFCKAFNARTEKMEKGMPIPVVITVYSDRSFTFETKTPPASFLLKQAAGLKSGSSRPNTQKVGTIKRAKVQEIAELKAADMTGADVEAMTRSIEGTARSMGLVVED</sequence>
<keyword id="KW-0488">Methylation</keyword>
<keyword id="KW-1185">Reference proteome</keyword>
<keyword id="KW-0687">Ribonucleoprotein</keyword>
<keyword id="KW-0689">Ribosomal protein</keyword>
<keyword id="KW-0694">RNA-binding</keyword>
<keyword id="KW-0699">rRNA-binding</keyword>
<dbReference type="EMBL" id="CP000507">
    <property type="protein sequence ID" value="ABL98413.1"/>
    <property type="molecule type" value="Genomic_DNA"/>
</dbReference>
<dbReference type="RefSeq" id="WP_011758324.1">
    <property type="nucleotide sequence ID" value="NC_008700.1"/>
</dbReference>
<dbReference type="SMR" id="A1S207"/>
<dbReference type="STRING" id="326297.Sama_0202"/>
<dbReference type="KEGG" id="saz:Sama_0202"/>
<dbReference type="eggNOG" id="COG0080">
    <property type="taxonomic scope" value="Bacteria"/>
</dbReference>
<dbReference type="HOGENOM" id="CLU_074237_2_0_6"/>
<dbReference type="OrthoDB" id="9802408at2"/>
<dbReference type="Proteomes" id="UP000009175">
    <property type="component" value="Chromosome"/>
</dbReference>
<dbReference type="GO" id="GO:0022625">
    <property type="term" value="C:cytosolic large ribosomal subunit"/>
    <property type="evidence" value="ECO:0007669"/>
    <property type="project" value="TreeGrafter"/>
</dbReference>
<dbReference type="GO" id="GO:0070180">
    <property type="term" value="F:large ribosomal subunit rRNA binding"/>
    <property type="evidence" value="ECO:0007669"/>
    <property type="project" value="UniProtKB-UniRule"/>
</dbReference>
<dbReference type="GO" id="GO:0003735">
    <property type="term" value="F:structural constituent of ribosome"/>
    <property type="evidence" value="ECO:0007669"/>
    <property type="project" value="InterPro"/>
</dbReference>
<dbReference type="GO" id="GO:0006412">
    <property type="term" value="P:translation"/>
    <property type="evidence" value="ECO:0007669"/>
    <property type="project" value="UniProtKB-UniRule"/>
</dbReference>
<dbReference type="CDD" id="cd00349">
    <property type="entry name" value="Ribosomal_L11"/>
    <property type="match status" value="1"/>
</dbReference>
<dbReference type="FunFam" id="1.10.10.250:FF:000001">
    <property type="entry name" value="50S ribosomal protein L11"/>
    <property type="match status" value="1"/>
</dbReference>
<dbReference type="FunFam" id="3.30.1550.10:FF:000001">
    <property type="entry name" value="50S ribosomal protein L11"/>
    <property type="match status" value="1"/>
</dbReference>
<dbReference type="Gene3D" id="1.10.10.250">
    <property type="entry name" value="Ribosomal protein L11, C-terminal domain"/>
    <property type="match status" value="1"/>
</dbReference>
<dbReference type="Gene3D" id="3.30.1550.10">
    <property type="entry name" value="Ribosomal protein L11/L12, N-terminal domain"/>
    <property type="match status" value="1"/>
</dbReference>
<dbReference type="HAMAP" id="MF_00736">
    <property type="entry name" value="Ribosomal_uL11"/>
    <property type="match status" value="1"/>
</dbReference>
<dbReference type="InterPro" id="IPR000911">
    <property type="entry name" value="Ribosomal_uL11"/>
</dbReference>
<dbReference type="InterPro" id="IPR006519">
    <property type="entry name" value="Ribosomal_uL11_bac-typ"/>
</dbReference>
<dbReference type="InterPro" id="IPR020783">
    <property type="entry name" value="Ribosomal_uL11_C"/>
</dbReference>
<dbReference type="InterPro" id="IPR036769">
    <property type="entry name" value="Ribosomal_uL11_C_sf"/>
</dbReference>
<dbReference type="InterPro" id="IPR020785">
    <property type="entry name" value="Ribosomal_uL11_CS"/>
</dbReference>
<dbReference type="InterPro" id="IPR020784">
    <property type="entry name" value="Ribosomal_uL11_N"/>
</dbReference>
<dbReference type="InterPro" id="IPR036796">
    <property type="entry name" value="Ribosomal_uL11_N_sf"/>
</dbReference>
<dbReference type="NCBIfam" id="TIGR01632">
    <property type="entry name" value="L11_bact"/>
    <property type="match status" value="1"/>
</dbReference>
<dbReference type="PANTHER" id="PTHR11661">
    <property type="entry name" value="60S RIBOSOMAL PROTEIN L12"/>
    <property type="match status" value="1"/>
</dbReference>
<dbReference type="PANTHER" id="PTHR11661:SF1">
    <property type="entry name" value="LARGE RIBOSOMAL SUBUNIT PROTEIN UL11M"/>
    <property type="match status" value="1"/>
</dbReference>
<dbReference type="Pfam" id="PF00298">
    <property type="entry name" value="Ribosomal_L11"/>
    <property type="match status" value="1"/>
</dbReference>
<dbReference type="Pfam" id="PF03946">
    <property type="entry name" value="Ribosomal_L11_N"/>
    <property type="match status" value="1"/>
</dbReference>
<dbReference type="SMART" id="SM00649">
    <property type="entry name" value="RL11"/>
    <property type="match status" value="1"/>
</dbReference>
<dbReference type="SUPFAM" id="SSF54747">
    <property type="entry name" value="Ribosomal L11/L12e N-terminal domain"/>
    <property type="match status" value="1"/>
</dbReference>
<dbReference type="SUPFAM" id="SSF46906">
    <property type="entry name" value="Ribosomal protein L11, C-terminal domain"/>
    <property type="match status" value="1"/>
</dbReference>
<dbReference type="PROSITE" id="PS00359">
    <property type="entry name" value="RIBOSOMAL_L11"/>
    <property type="match status" value="1"/>
</dbReference>
<comment type="function">
    <text evidence="1">Forms part of the ribosomal stalk which helps the ribosome interact with GTP-bound translation factors.</text>
</comment>
<comment type="subunit">
    <text evidence="1">Part of the ribosomal stalk of the 50S ribosomal subunit. Interacts with L10 and the large rRNA to form the base of the stalk. L10 forms an elongated spine to which L12 dimers bind in a sequential fashion forming a multimeric L10(L12)X complex.</text>
</comment>
<comment type="PTM">
    <text evidence="1">One or more lysine residues are methylated.</text>
</comment>
<comment type="similarity">
    <text evidence="1">Belongs to the universal ribosomal protein uL11 family.</text>
</comment>
<protein>
    <recommendedName>
        <fullName evidence="1">Large ribosomal subunit protein uL11</fullName>
    </recommendedName>
    <alternativeName>
        <fullName evidence="2">50S ribosomal protein L11</fullName>
    </alternativeName>
</protein>
<evidence type="ECO:0000255" key="1">
    <source>
        <dbReference type="HAMAP-Rule" id="MF_00736"/>
    </source>
</evidence>
<evidence type="ECO:0000305" key="2"/>
<accession>A1S207</accession>
<reference key="1">
    <citation type="submission" date="2006-12" db="EMBL/GenBank/DDBJ databases">
        <title>Complete sequence of Shewanella amazonensis SB2B.</title>
        <authorList>
            <consortium name="US DOE Joint Genome Institute"/>
            <person name="Copeland A."/>
            <person name="Lucas S."/>
            <person name="Lapidus A."/>
            <person name="Barry K."/>
            <person name="Detter J.C."/>
            <person name="Glavina del Rio T."/>
            <person name="Hammon N."/>
            <person name="Israni S."/>
            <person name="Dalin E."/>
            <person name="Tice H."/>
            <person name="Pitluck S."/>
            <person name="Munk A.C."/>
            <person name="Brettin T."/>
            <person name="Bruce D."/>
            <person name="Han C."/>
            <person name="Tapia R."/>
            <person name="Gilna P."/>
            <person name="Schmutz J."/>
            <person name="Larimer F."/>
            <person name="Land M."/>
            <person name="Hauser L."/>
            <person name="Kyrpides N."/>
            <person name="Mikhailova N."/>
            <person name="Fredrickson J."/>
            <person name="Richardson P."/>
        </authorList>
    </citation>
    <scope>NUCLEOTIDE SEQUENCE [LARGE SCALE GENOMIC DNA]</scope>
    <source>
        <strain>ATCC BAA-1098 / SB2B</strain>
    </source>
</reference>
<feature type="chain" id="PRO_1000046259" description="Large ribosomal subunit protein uL11">
    <location>
        <begin position="1"/>
        <end position="142"/>
    </location>
</feature>
<name>RL11_SHEAM</name>
<gene>
    <name evidence="1" type="primary">rplK</name>
    <name type="ordered locus">Sama_0202</name>
</gene>
<proteinExistence type="inferred from homology"/>